<reference key="1">
    <citation type="journal article" date="2011" name="Stand. Genomic Sci.">
        <title>Complete genome sequence of Parvibaculum lavamentivorans type strain (DS-1(T)).</title>
        <authorList>
            <person name="Schleheck D."/>
            <person name="Weiss M."/>
            <person name="Pitluck S."/>
            <person name="Bruce D."/>
            <person name="Land M.L."/>
            <person name="Han S."/>
            <person name="Saunders E."/>
            <person name="Tapia R."/>
            <person name="Detter C."/>
            <person name="Brettin T."/>
            <person name="Han J."/>
            <person name="Woyke T."/>
            <person name="Goodwin L."/>
            <person name="Pennacchio L."/>
            <person name="Nolan M."/>
            <person name="Cook A.M."/>
            <person name="Kjelleberg S."/>
            <person name="Thomas T."/>
        </authorList>
    </citation>
    <scope>NUCLEOTIDE SEQUENCE [LARGE SCALE GENOMIC DNA]</scope>
    <source>
        <strain>DS-1 / DSM 13023 / NCIMB 13966</strain>
    </source>
</reference>
<comment type="similarity">
    <text evidence="1">Belongs to the UPF0260 family.</text>
</comment>
<name>Y898_PARL1</name>
<accession>A7HRI8</accession>
<keyword id="KW-1185">Reference proteome</keyword>
<proteinExistence type="inferred from homology"/>
<protein>
    <recommendedName>
        <fullName evidence="1">UPF0260 protein Plav_0898</fullName>
    </recommendedName>
</protein>
<feature type="chain" id="PRO_1000072726" description="UPF0260 protein Plav_0898">
    <location>
        <begin position="1"/>
        <end position="153"/>
    </location>
</feature>
<evidence type="ECO:0000255" key="1">
    <source>
        <dbReference type="HAMAP-Rule" id="MF_00676"/>
    </source>
</evidence>
<sequence>MTDAEEPFWRAKRLEQMTRAEWESLCDGCAKCCLVKLEDEDTGELEYTDIACRLLDAETCRCSDYANRSERVPDCVTLTPKNLEDIDWMPPSCAYRLLKEGKDLPWWHPLVSGEYEAVRLAGMSVHGRFLFEDEADMEDLEGRIVSWPLMPPE</sequence>
<organism>
    <name type="scientific">Parvibaculum lavamentivorans (strain DS-1 / DSM 13023 / NCIMB 13966)</name>
    <dbReference type="NCBI Taxonomy" id="402881"/>
    <lineage>
        <taxon>Bacteria</taxon>
        <taxon>Pseudomonadati</taxon>
        <taxon>Pseudomonadota</taxon>
        <taxon>Alphaproteobacteria</taxon>
        <taxon>Hyphomicrobiales</taxon>
        <taxon>Parvibaculaceae</taxon>
        <taxon>Parvibaculum</taxon>
    </lineage>
</organism>
<gene>
    <name type="ordered locus">Plav_0898</name>
</gene>
<dbReference type="EMBL" id="CP000774">
    <property type="protein sequence ID" value="ABS62521.1"/>
    <property type="molecule type" value="Genomic_DNA"/>
</dbReference>
<dbReference type="RefSeq" id="WP_012109774.1">
    <property type="nucleotide sequence ID" value="NC_009719.1"/>
</dbReference>
<dbReference type="STRING" id="402881.Plav_0898"/>
<dbReference type="KEGG" id="pla:Plav_0898"/>
<dbReference type="eggNOG" id="COG2983">
    <property type="taxonomic scope" value="Bacteria"/>
</dbReference>
<dbReference type="HOGENOM" id="CLU_109769_0_1_5"/>
<dbReference type="OrthoDB" id="9786855at2"/>
<dbReference type="Proteomes" id="UP000006377">
    <property type="component" value="Chromosome"/>
</dbReference>
<dbReference type="HAMAP" id="MF_00676">
    <property type="entry name" value="UPF0260"/>
    <property type="match status" value="1"/>
</dbReference>
<dbReference type="InterPro" id="IPR005358">
    <property type="entry name" value="Puta_zinc/iron-chelating_dom"/>
</dbReference>
<dbReference type="InterPro" id="IPR008228">
    <property type="entry name" value="UCP006173"/>
</dbReference>
<dbReference type="NCBIfam" id="NF003501">
    <property type="entry name" value="PRK05170.1-5"/>
    <property type="match status" value="1"/>
</dbReference>
<dbReference type="NCBIfam" id="NF003507">
    <property type="entry name" value="PRK05170.2-5"/>
    <property type="match status" value="1"/>
</dbReference>
<dbReference type="PANTHER" id="PTHR37421">
    <property type="entry name" value="UPF0260 PROTEIN YCGN"/>
    <property type="match status" value="1"/>
</dbReference>
<dbReference type="PANTHER" id="PTHR37421:SF1">
    <property type="entry name" value="UPF0260 PROTEIN YCGN"/>
    <property type="match status" value="1"/>
</dbReference>
<dbReference type="Pfam" id="PF03692">
    <property type="entry name" value="CxxCxxCC"/>
    <property type="match status" value="1"/>
</dbReference>
<dbReference type="PIRSF" id="PIRSF006173">
    <property type="entry name" value="UCP006173"/>
    <property type="match status" value="1"/>
</dbReference>